<proteinExistence type="evidence at protein level"/>
<keyword id="KW-0009">Actin-binding</keyword>
<keyword id="KW-0175">Coiled coil</keyword>
<keyword id="KW-0963">Cytoplasm</keyword>
<keyword id="KW-0206">Cytoskeleton</keyword>
<keyword id="KW-1185">Reference proteome</keyword>
<keyword id="KW-0677">Repeat</keyword>
<keyword id="KW-0853">WD repeat</keyword>
<dbReference type="EMBL" id="AK047527">
    <property type="protein sequence ID" value="BAC33080.1"/>
    <property type="status" value="ALT_INIT"/>
    <property type="molecule type" value="mRNA"/>
</dbReference>
<dbReference type="EMBL" id="AK087414">
    <property type="protein sequence ID" value="BAC39865.1"/>
    <property type="status" value="ALT_INIT"/>
    <property type="molecule type" value="mRNA"/>
</dbReference>
<dbReference type="EMBL" id="BC062649">
    <property type="protein sequence ID" value="AAH62649.1"/>
    <property type="status" value="ALT_INIT"/>
    <property type="molecule type" value="mRNA"/>
</dbReference>
<dbReference type="CCDS" id="CCDS23264.2"/>
<dbReference type="RefSeq" id="NP_780693.2">
    <property type="nucleotide sequence ID" value="NM_175484.3"/>
</dbReference>
<dbReference type="RefSeq" id="XP_006511157.2">
    <property type="nucleotide sequence ID" value="XM_006511094.3"/>
</dbReference>
<dbReference type="RefSeq" id="XP_006511160.1">
    <property type="nucleotide sequence ID" value="XM_006511097.3"/>
</dbReference>
<dbReference type="RefSeq" id="XP_006511161.1">
    <property type="nucleotide sequence ID" value="XM_006511098.3"/>
</dbReference>
<dbReference type="RefSeq" id="XP_006511162.1">
    <property type="nucleotide sequence ID" value="XM_006511099.3"/>
</dbReference>
<dbReference type="RefSeq" id="XP_006511163.1">
    <property type="nucleotide sequence ID" value="XM_006511100.2"/>
</dbReference>
<dbReference type="SMR" id="Q8BH44"/>
<dbReference type="BioGRID" id="231659">
    <property type="interactions" value="8"/>
</dbReference>
<dbReference type="FunCoup" id="Q8BH44">
    <property type="interactions" value="36"/>
</dbReference>
<dbReference type="IntAct" id="Q8BH44">
    <property type="interactions" value="1"/>
</dbReference>
<dbReference type="MINT" id="Q8BH44"/>
<dbReference type="STRING" id="10090.ENSMUSP00000041826"/>
<dbReference type="GlyGen" id="Q8BH44">
    <property type="glycosylation" value="3 sites, 1 N-linked glycan (1 site), 1 O-linked glycan (1 site)"/>
</dbReference>
<dbReference type="iPTMnet" id="Q8BH44"/>
<dbReference type="PhosphoSitePlus" id="Q8BH44"/>
<dbReference type="SwissPalm" id="Q8BH44"/>
<dbReference type="PaxDb" id="10090-ENSMUSP00000041826"/>
<dbReference type="PeptideAtlas" id="Q8BH44"/>
<dbReference type="ProteomicsDB" id="285265"/>
<dbReference type="Antibodypedia" id="2828">
    <property type="antibodies" value="166 antibodies from 24 providers"/>
</dbReference>
<dbReference type="DNASU" id="235431"/>
<dbReference type="Ensembl" id="ENSMUST00000048043.12">
    <property type="protein sequence ID" value="ENSMUSP00000041826.6"/>
    <property type="gene ID" value="ENSMUSG00000041729.16"/>
</dbReference>
<dbReference type="GeneID" id="235431"/>
<dbReference type="KEGG" id="mmu:235431"/>
<dbReference type="UCSC" id="uc009qaj.1">
    <property type="organism name" value="mouse"/>
</dbReference>
<dbReference type="AGR" id="MGI:2444283"/>
<dbReference type="CTD" id="10391"/>
<dbReference type="MGI" id="MGI:2444283">
    <property type="gene designation" value="Coro2b"/>
</dbReference>
<dbReference type="VEuPathDB" id="HostDB:ENSMUSG00000041729"/>
<dbReference type="eggNOG" id="KOG0303">
    <property type="taxonomic scope" value="Eukaryota"/>
</dbReference>
<dbReference type="GeneTree" id="ENSGT00940000158689"/>
<dbReference type="HOGENOM" id="CLU_026859_4_0_1"/>
<dbReference type="InParanoid" id="Q8BH44"/>
<dbReference type="OMA" id="EREMAIW"/>
<dbReference type="OrthoDB" id="1850764at2759"/>
<dbReference type="PhylomeDB" id="Q8BH44"/>
<dbReference type="TreeFam" id="TF314280"/>
<dbReference type="BioGRID-ORCS" id="235431">
    <property type="hits" value="0 hits in 77 CRISPR screens"/>
</dbReference>
<dbReference type="CD-CODE" id="CE726F99">
    <property type="entry name" value="Postsynaptic density"/>
</dbReference>
<dbReference type="ChiTaRS" id="Coro2b">
    <property type="organism name" value="mouse"/>
</dbReference>
<dbReference type="PRO" id="PR:Q8BH44"/>
<dbReference type="Proteomes" id="UP000000589">
    <property type="component" value="Chromosome 9"/>
</dbReference>
<dbReference type="RNAct" id="Q8BH44">
    <property type="molecule type" value="protein"/>
</dbReference>
<dbReference type="Bgee" id="ENSMUSG00000041729">
    <property type="expression patterns" value="Expressed in retinal neural layer and 203 other cell types or tissues"/>
</dbReference>
<dbReference type="ExpressionAtlas" id="Q8BH44">
    <property type="expression patterns" value="baseline and differential"/>
</dbReference>
<dbReference type="GO" id="GO:0005737">
    <property type="term" value="C:cytoplasm"/>
    <property type="evidence" value="ECO:0007669"/>
    <property type="project" value="UniProtKB-KW"/>
</dbReference>
<dbReference type="GO" id="GO:0005925">
    <property type="term" value="C:focal adhesion"/>
    <property type="evidence" value="ECO:0000314"/>
    <property type="project" value="MGI"/>
</dbReference>
<dbReference type="GO" id="GO:0001725">
    <property type="term" value="C:stress fiber"/>
    <property type="evidence" value="ECO:0000266"/>
    <property type="project" value="MGI"/>
</dbReference>
<dbReference type="GO" id="GO:0003779">
    <property type="term" value="F:actin binding"/>
    <property type="evidence" value="ECO:0007669"/>
    <property type="project" value="UniProtKB-KW"/>
</dbReference>
<dbReference type="GO" id="GO:1990147">
    <property type="term" value="F:talin binding"/>
    <property type="evidence" value="ECO:0000266"/>
    <property type="project" value="MGI"/>
</dbReference>
<dbReference type="GO" id="GO:0017166">
    <property type="term" value="F:vinculin binding"/>
    <property type="evidence" value="ECO:0000266"/>
    <property type="project" value="MGI"/>
</dbReference>
<dbReference type="GO" id="GO:0048041">
    <property type="term" value="P:focal adhesion assembly"/>
    <property type="evidence" value="ECO:0000315"/>
    <property type="project" value="MGI"/>
</dbReference>
<dbReference type="GO" id="GO:0010812">
    <property type="term" value="P:negative regulation of cell-substrate adhesion"/>
    <property type="evidence" value="ECO:0000266"/>
    <property type="project" value="MGI"/>
</dbReference>
<dbReference type="GO" id="GO:1904950">
    <property type="term" value="P:negative regulation of establishment of protein localization"/>
    <property type="evidence" value="ECO:0000266"/>
    <property type="project" value="MGI"/>
</dbReference>
<dbReference type="GO" id="GO:0051497">
    <property type="term" value="P:negative regulation of stress fiber assembly"/>
    <property type="evidence" value="ECO:0000315"/>
    <property type="project" value="MGI"/>
</dbReference>
<dbReference type="GO" id="GO:1904951">
    <property type="term" value="P:positive regulation of establishment of protein localization"/>
    <property type="evidence" value="ECO:0000266"/>
    <property type="project" value="MGI"/>
</dbReference>
<dbReference type="GO" id="GO:0032956">
    <property type="term" value="P:regulation of actin cytoskeleton organization"/>
    <property type="evidence" value="ECO:0000266"/>
    <property type="project" value="MGI"/>
</dbReference>
<dbReference type="GO" id="GO:0080135">
    <property type="term" value="P:regulation of cellular response to stress"/>
    <property type="evidence" value="ECO:0000266"/>
    <property type="project" value="MGI"/>
</dbReference>
<dbReference type="GO" id="GO:0003093">
    <property type="term" value="P:regulation of glomerular filtration"/>
    <property type="evidence" value="ECO:0000315"/>
    <property type="project" value="MGI"/>
</dbReference>
<dbReference type="FunFam" id="2.130.10.10:FF:000053">
    <property type="entry name" value="Coronin"/>
    <property type="match status" value="1"/>
</dbReference>
<dbReference type="Gene3D" id="2.130.10.10">
    <property type="entry name" value="YVTN repeat-like/Quinoprotein amine dehydrogenase"/>
    <property type="match status" value="1"/>
</dbReference>
<dbReference type="InterPro" id="IPR015505">
    <property type="entry name" value="Coronin"/>
</dbReference>
<dbReference type="InterPro" id="IPR015048">
    <property type="entry name" value="DUF1899"/>
</dbReference>
<dbReference type="InterPro" id="IPR015943">
    <property type="entry name" value="WD40/YVTN_repeat-like_dom_sf"/>
</dbReference>
<dbReference type="InterPro" id="IPR019775">
    <property type="entry name" value="WD40_repeat_CS"/>
</dbReference>
<dbReference type="InterPro" id="IPR036322">
    <property type="entry name" value="WD40_repeat_dom_sf"/>
</dbReference>
<dbReference type="InterPro" id="IPR001680">
    <property type="entry name" value="WD40_rpt"/>
</dbReference>
<dbReference type="PANTHER" id="PTHR10856">
    <property type="entry name" value="CORONIN"/>
    <property type="match status" value="1"/>
</dbReference>
<dbReference type="PANTHER" id="PTHR10856:SF17">
    <property type="entry name" value="CORONIN-2B"/>
    <property type="match status" value="1"/>
</dbReference>
<dbReference type="Pfam" id="PF08953">
    <property type="entry name" value="DUF1899"/>
    <property type="match status" value="1"/>
</dbReference>
<dbReference type="Pfam" id="PF00400">
    <property type="entry name" value="WD40"/>
    <property type="match status" value="3"/>
</dbReference>
<dbReference type="Pfam" id="PF16300">
    <property type="entry name" value="WD40_4"/>
    <property type="match status" value="1"/>
</dbReference>
<dbReference type="SMART" id="SM01166">
    <property type="entry name" value="DUF1899"/>
    <property type="match status" value="1"/>
</dbReference>
<dbReference type="SMART" id="SM01167">
    <property type="entry name" value="DUF1900"/>
    <property type="match status" value="1"/>
</dbReference>
<dbReference type="SMART" id="SM00320">
    <property type="entry name" value="WD40"/>
    <property type="match status" value="4"/>
</dbReference>
<dbReference type="SUPFAM" id="SSF50978">
    <property type="entry name" value="WD40 repeat-like"/>
    <property type="match status" value="1"/>
</dbReference>
<dbReference type="PROSITE" id="PS00678">
    <property type="entry name" value="WD_REPEATS_1"/>
    <property type="match status" value="2"/>
</dbReference>
<dbReference type="PROSITE" id="PS50082">
    <property type="entry name" value="WD_REPEATS_2"/>
    <property type="match status" value="3"/>
</dbReference>
<dbReference type="PROSITE" id="PS50294">
    <property type="entry name" value="WD_REPEATS_REGION"/>
    <property type="match status" value="1"/>
</dbReference>
<feature type="chain" id="PRO_0000050931" description="Coronin-2B">
    <location>
        <begin position="1"/>
        <end position="480"/>
    </location>
</feature>
<feature type="repeat" description="WD 1">
    <location>
        <begin position="85"/>
        <end position="125"/>
    </location>
</feature>
<feature type="repeat" description="WD 2">
    <location>
        <begin position="135"/>
        <end position="177"/>
    </location>
</feature>
<feature type="repeat" description="WD 3">
    <location>
        <begin position="179"/>
        <end position="217"/>
    </location>
</feature>
<feature type="repeat" description="WD 4">
    <location>
        <begin position="220"/>
        <end position="263"/>
    </location>
</feature>
<feature type="repeat" description="WD 5">
    <location>
        <begin position="265"/>
        <end position="308"/>
    </location>
</feature>
<feature type="coiled-coil region" evidence="2">
    <location>
        <begin position="436"/>
        <end position="479"/>
    </location>
</feature>
<feature type="sequence conflict" description="In Ref. 2; AAH62649." evidence="3" ref="2">
    <original>K</original>
    <variation>N</variation>
    <location>
        <position position="203"/>
    </location>
</feature>
<reference key="1">
    <citation type="journal article" date="2005" name="Science">
        <title>The transcriptional landscape of the mammalian genome.</title>
        <authorList>
            <person name="Carninci P."/>
            <person name="Kasukawa T."/>
            <person name="Katayama S."/>
            <person name="Gough J."/>
            <person name="Frith M.C."/>
            <person name="Maeda N."/>
            <person name="Oyama R."/>
            <person name="Ravasi T."/>
            <person name="Lenhard B."/>
            <person name="Wells C."/>
            <person name="Kodzius R."/>
            <person name="Shimokawa K."/>
            <person name="Bajic V.B."/>
            <person name="Brenner S.E."/>
            <person name="Batalov S."/>
            <person name="Forrest A.R."/>
            <person name="Zavolan M."/>
            <person name="Davis M.J."/>
            <person name="Wilming L.G."/>
            <person name="Aidinis V."/>
            <person name="Allen J.E."/>
            <person name="Ambesi-Impiombato A."/>
            <person name="Apweiler R."/>
            <person name="Aturaliya R.N."/>
            <person name="Bailey T.L."/>
            <person name="Bansal M."/>
            <person name="Baxter L."/>
            <person name="Beisel K.W."/>
            <person name="Bersano T."/>
            <person name="Bono H."/>
            <person name="Chalk A.M."/>
            <person name="Chiu K.P."/>
            <person name="Choudhary V."/>
            <person name="Christoffels A."/>
            <person name="Clutterbuck D.R."/>
            <person name="Crowe M.L."/>
            <person name="Dalla E."/>
            <person name="Dalrymple B.P."/>
            <person name="de Bono B."/>
            <person name="Della Gatta G."/>
            <person name="di Bernardo D."/>
            <person name="Down T."/>
            <person name="Engstrom P."/>
            <person name="Fagiolini M."/>
            <person name="Faulkner G."/>
            <person name="Fletcher C.F."/>
            <person name="Fukushima T."/>
            <person name="Furuno M."/>
            <person name="Futaki S."/>
            <person name="Gariboldi M."/>
            <person name="Georgii-Hemming P."/>
            <person name="Gingeras T.R."/>
            <person name="Gojobori T."/>
            <person name="Green R.E."/>
            <person name="Gustincich S."/>
            <person name="Harbers M."/>
            <person name="Hayashi Y."/>
            <person name="Hensch T.K."/>
            <person name="Hirokawa N."/>
            <person name="Hill D."/>
            <person name="Huminiecki L."/>
            <person name="Iacono M."/>
            <person name="Ikeo K."/>
            <person name="Iwama A."/>
            <person name="Ishikawa T."/>
            <person name="Jakt M."/>
            <person name="Kanapin A."/>
            <person name="Katoh M."/>
            <person name="Kawasawa Y."/>
            <person name="Kelso J."/>
            <person name="Kitamura H."/>
            <person name="Kitano H."/>
            <person name="Kollias G."/>
            <person name="Krishnan S.P."/>
            <person name="Kruger A."/>
            <person name="Kummerfeld S.K."/>
            <person name="Kurochkin I.V."/>
            <person name="Lareau L.F."/>
            <person name="Lazarevic D."/>
            <person name="Lipovich L."/>
            <person name="Liu J."/>
            <person name="Liuni S."/>
            <person name="McWilliam S."/>
            <person name="Madan Babu M."/>
            <person name="Madera M."/>
            <person name="Marchionni L."/>
            <person name="Matsuda H."/>
            <person name="Matsuzawa S."/>
            <person name="Miki H."/>
            <person name="Mignone F."/>
            <person name="Miyake S."/>
            <person name="Morris K."/>
            <person name="Mottagui-Tabar S."/>
            <person name="Mulder N."/>
            <person name="Nakano N."/>
            <person name="Nakauchi H."/>
            <person name="Ng P."/>
            <person name="Nilsson R."/>
            <person name="Nishiguchi S."/>
            <person name="Nishikawa S."/>
            <person name="Nori F."/>
            <person name="Ohara O."/>
            <person name="Okazaki Y."/>
            <person name="Orlando V."/>
            <person name="Pang K.C."/>
            <person name="Pavan W.J."/>
            <person name="Pavesi G."/>
            <person name="Pesole G."/>
            <person name="Petrovsky N."/>
            <person name="Piazza S."/>
            <person name="Reed J."/>
            <person name="Reid J.F."/>
            <person name="Ring B.Z."/>
            <person name="Ringwald M."/>
            <person name="Rost B."/>
            <person name="Ruan Y."/>
            <person name="Salzberg S.L."/>
            <person name="Sandelin A."/>
            <person name="Schneider C."/>
            <person name="Schoenbach C."/>
            <person name="Sekiguchi K."/>
            <person name="Semple C.A."/>
            <person name="Seno S."/>
            <person name="Sessa L."/>
            <person name="Sheng Y."/>
            <person name="Shibata Y."/>
            <person name="Shimada H."/>
            <person name="Shimada K."/>
            <person name="Silva D."/>
            <person name="Sinclair B."/>
            <person name="Sperling S."/>
            <person name="Stupka E."/>
            <person name="Sugiura K."/>
            <person name="Sultana R."/>
            <person name="Takenaka Y."/>
            <person name="Taki K."/>
            <person name="Tammoja K."/>
            <person name="Tan S.L."/>
            <person name="Tang S."/>
            <person name="Taylor M.S."/>
            <person name="Tegner J."/>
            <person name="Teichmann S.A."/>
            <person name="Ueda H.R."/>
            <person name="van Nimwegen E."/>
            <person name="Verardo R."/>
            <person name="Wei C.L."/>
            <person name="Yagi K."/>
            <person name="Yamanishi H."/>
            <person name="Zabarovsky E."/>
            <person name="Zhu S."/>
            <person name="Zimmer A."/>
            <person name="Hide W."/>
            <person name="Bult C."/>
            <person name="Grimmond S.M."/>
            <person name="Teasdale R.D."/>
            <person name="Liu E.T."/>
            <person name="Brusic V."/>
            <person name="Quackenbush J."/>
            <person name="Wahlestedt C."/>
            <person name="Mattick J.S."/>
            <person name="Hume D.A."/>
            <person name="Kai C."/>
            <person name="Sasaki D."/>
            <person name="Tomaru Y."/>
            <person name="Fukuda S."/>
            <person name="Kanamori-Katayama M."/>
            <person name="Suzuki M."/>
            <person name="Aoki J."/>
            <person name="Arakawa T."/>
            <person name="Iida J."/>
            <person name="Imamura K."/>
            <person name="Itoh M."/>
            <person name="Kato T."/>
            <person name="Kawaji H."/>
            <person name="Kawagashira N."/>
            <person name="Kawashima T."/>
            <person name="Kojima M."/>
            <person name="Kondo S."/>
            <person name="Konno H."/>
            <person name="Nakano K."/>
            <person name="Ninomiya N."/>
            <person name="Nishio T."/>
            <person name="Okada M."/>
            <person name="Plessy C."/>
            <person name="Shibata K."/>
            <person name="Shiraki T."/>
            <person name="Suzuki S."/>
            <person name="Tagami M."/>
            <person name="Waki K."/>
            <person name="Watahiki A."/>
            <person name="Okamura-Oho Y."/>
            <person name="Suzuki H."/>
            <person name="Kawai J."/>
            <person name="Hayashizaki Y."/>
        </authorList>
    </citation>
    <scope>NUCLEOTIDE SEQUENCE [LARGE SCALE MRNA]</scope>
    <source>
        <strain>C57BL/6J</strain>
        <tissue>Cerebellum</tissue>
        <tissue>Eye</tissue>
    </source>
</reference>
<reference key="2">
    <citation type="journal article" date="2004" name="Genome Res.">
        <title>The status, quality, and expansion of the NIH full-length cDNA project: the Mammalian Gene Collection (MGC).</title>
        <authorList>
            <consortium name="The MGC Project Team"/>
        </authorList>
    </citation>
    <scope>NUCLEOTIDE SEQUENCE [LARGE SCALE MRNA]</scope>
    <source>
        <strain>C57BL/6J</strain>
    </source>
</reference>
<reference key="3">
    <citation type="journal article" date="2010" name="Cell">
        <title>A tissue-specific atlas of mouse protein phosphorylation and expression.</title>
        <authorList>
            <person name="Huttlin E.L."/>
            <person name="Jedrychowski M.P."/>
            <person name="Elias J.E."/>
            <person name="Goswami T."/>
            <person name="Rad R."/>
            <person name="Beausoleil S.A."/>
            <person name="Villen J."/>
            <person name="Haas W."/>
            <person name="Sowa M.E."/>
            <person name="Gygi S.P."/>
        </authorList>
    </citation>
    <scope>IDENTIFICATION BY MASS SPECTROMETRY [LARGE SCALE ANALYSIS]</scope>
    <source>
        <tissue>Brain</tissue>
    </source>
</reference>
<name>COR2B_MOUSE</name>
<organism>
    <name type="scientific">Mus musculus</name>
    <name type="common">Mouse</name>
    <dbReference type="NCBI Taxonomy" id="10090"/>
    <lineage>
        <taxon>Eukaryota</taxon>
        <taxon>Metazoa</taxon>
        <taxon>Chordata</taxon>
        <taxon>Craniata</taxon>
        <taxon>Vertebrata</taxon>
        <taxon>Euteleostomi</taxon>
        <taxon>Mammalia</taxon>
        <taxon>Eutheria</taxon>
        <taxon>Euarchontoglires</taxon>
        <taxon>Glires</taxon>
        <taxon>Rodentia</taxon>
        <taxon>Myomorpha</taxon>
        <taxon>Muroidea</taxon>
        <taxon>Muridae</taxon>
        <taxon>Murinae</taxon>
        <taxon>Mus</taxon>
        <taxon>Mus</taxon>
    </lineage>
</organism>
<protein>
    <recommendedName>
        <fullName>Coronin-2B</fullName>
    </recommendedName>
</protein>
<gene>
    <name type="primary">Coro2b</name>
</gene>
<accession>Q8BH44</accession>
<accession>Q6P5U9</accession>
<evidence type="ECO:0000250" key="1"/>
<evidence type="ECO:0000255" key="2"/>
<evidence type="ECO:0000305" key="3"/>
<sequence length="480" mass="54936">MTVTKMSWRPQYRSSKFRNVYGKAANREHCFDGIPITKNVHDNHFCAVNARFLAIVTESAGGGSFLVIPLEQTGRIEPNYPKVCGHQGNVLDIKWNPFIDNIIASCSEDTSVRIWEIPDGGLKRNMTEALLELHGHSRRVGLVEWHPTTNNILFSAGYDYKVLIWNLDIGEPVKMIDCHTDVILCMSFNTDGSLLTTTCKDKKLRVIEPRSGRVLQEANCKNHRVNRVVFLGNMKRLLTTGVSRWNTRQIALWDQEDLSMPMIEEEIDGLSGLLFPFYDADTHMLYLAGKGDGNIRYYEISTEKPYLSYLMEFRSPAPQKGLGVMPKHGLDVSACEVFRFYKLVTLKGLIEPISMIVPRRSDSYQEDIYPMTPGTEPALTPDEWLGGINRDPVLMSLKEGYKKSSKVVFKAPIREKKSVVVNGIDLLENVPPRTENELLRMFFRQQDEIRRLKEELAQKDIRLRQLQLELKNLRNNPKNC</sequence>
<comment type="function">
    <text evidence="1">May play a role in the reorganization of neuronal actin structure.</text>
</comment>
<comment type="subunit">
    <text evidence="1">Binds to F-actin and to vinculin.</text>
</comment>
<comment type="subcellular location">
    <subcellularLocation>
        <location evidence="1">Cytoplasm</location>
        <location evidence="1">Cytoskeleton</location>
    </subcellularLocation>
</comment>
<comment type="similarity">
    <text evidence="3">Belongs to the WD repeat coronin family.</text>
</comment>
<comment type="sequence caution" evidence="3">
    <conflict type="erroneous initiation">
        <sequence resource="EMBL-CDS" id="AAH62649"/>
    </conflict>
</comment>
<comment type="sequence caution" evidence="3">
    <conflict type="erroneous initiation">
        <sequence resource="EMBL-CDS" id="BAC33080"/>
    </conflict>
</comment>
<comment type="sequence caution" evidence="3">
    <conflict type="erroneous initiation">
        <sequence resource="EMBL-CDS" id="BAC39865"/>
    </conflict>
</comment>